<name>GLGB_CITK8</name>
<accession>A8AQY3</accession>
<organism>
    <name type="scientific">Citrobacter koseri (strain ATCC BAA-895 / CDC 4225-83 / SGSC4696)</name>
    <dbReference type="NCBI Taxonomy" id="290338"/>
    <lineage>
        <taxon>Bacteria</taxon>
        <taxon>Pseudomonadati</taxon>
        <taxon>Pseudomonadota</taxon>
        <taxon>Gammaproteobacteria</taxon>
        <taxon>Enterobacterales</taxon>
        <taxon>Enterobacteriaceae</taxon>
        <taxon>Citrobacter</taxon>
    </lineage>
</organism>
<evidence type="ECO:0000255" key="1">
    <source>
        <dbReference type="HAMAP-Rule" id="MF_00685"/>
    </source>
</evidence>
<keyword id="KW-0119">Carbohydrate metabolism</keyword>
<keyword id="KW-0320">Glycogen biosynthesis</keyword>
<keyword id="KW-0321">Glycogen metabolism</keyword>
<keyword id="KW-0328">Glycosyltransferase</keyword>
<keyword id="KW-1185">Reference proteome</keyword>
<keyword id="KW-0808">Transferase</keyword>
<comment type="function">
    <text evidence="1">Catalyzes the formation of the alpha-1,6-glucosidic linkages in glycogen by scission of a 1,4-alpha-linked oligosaccharide from growing alpha-1,4-glucan chains and the subsequent attachment of the oligosaccharide to the alpha-1,6 position.</text>
</comment>
<comment type="catalytic activity">
    <reaction evidence="1">
        <text>Transfers a segment of a (1-&gt;4)-alpha-D-glucan chain to a primary hydroxy group in a similar glucan chain.</text>
        <dbReference type="EC" id="2.4.1.18"/>
    </reaction>
</comment>
<comment type="pathway">
    <text evidence="1">Glycan biosynthesis; glycogen biosynthesis.</text>
</comment>
<comment type="subunit">
    <text evidence="1">Monomer.</text>
</comment>
<comment type="similarity">
    <text evidence="1">Belongs to the glycosyl hydrolase 13 family. GlgB subfamily.</text>
</comment>
<gene>
    <name evidence="1" type="primary">glgB</name>
    <name type="ordered locus">CKO_04851</name>
</gene>
<reference key="1">
    <citation type="submission" date="2007-08" db="EMBL/GenBank/DDBJ databases">
        <authorList>
            <consortium name="The Citrobacter koseri Genome Sequencing Project"/>
            <person name="McClelland M."/>
            <person name="Sanderson E.K."/>
            <person name="Porwollik S."/>
            <person name="Spieth J."/>
            <person name="Clifton W.S."/>
            <person name="Latreille P."/>
            <person name="Courtney L."/>
            <person name="Wang C."/>
            <person name="Pepin K."/>
            <person name="Bhonagiri V."/>
            <person name="Nash W."/>
            <person name="Johnson M."/>
            <person name="Thiruvilangam P."/>
            <person name="Wilson R."/>
        </authorList>
    </citation>
    <scope>NUCLEOTIDE SEQUENCE [LARGE SCALE GENOMIC DNA]</scope>
    <source>
        <strain>ATCC BAA-895 / CDC 4225-83 / SGSC4696</strain>
    </source>
</reference>
<proteinExistence type="inferred from homology"/>
<feature type="chain" id="PRO_1000044974" description="1,4-alpha-glucan branching enzyme GlgB">
    <location>
        <begin position="1"/>
        <end position="728"/>
    </location>
</feature>
<feature type="active site" description="Nucleophile" evidence="1">
    <location>
        <position position="405"/>
    </location>
</feature>
<feature type="active site" description="Proton donor" evidence="1">
    <location>
        <position position="458"/>
    </location>
</feature>
<protein>
    <recommendedName>
        <fullName evidence="1">1,4-alpha-glucan branching enzyme GlgB</fullName>
        <ecNumber evidence="1">2.4.1.18</ecNumber>
    </recommendedName>
    <alternativeName>
        <fullName evidence="1">1,4-alpha-D-glucan:1,4-alpha-D-glucan 6-glucosyl-transferase</fullName>
    </alternativeName>
    <alternativeName>
        <fullName evidence="1">Alpha-(1-&gt;4)-glucan branching enzyme</fullName>
    </alternativeName>
    <alternativeName>
        <fullName evidence="1">Glycogen branching enzyme</fullName>
        <shortName evidence="1">BE</shortName>
    </alternativeName>
</protein>
<sequence length="728" mass="84288">MSDRIDRDVINALIAGHFADPFSVLGMHQTTAGLEVRALLPDATEVWVIEPKTGRKVGKLECIDSRGFFSGVLPRRKNFFRYQLAVVWHGQQNLIDDPYRFGPLIQEMDAWLLSEGTHLRPYETLGAHADTMDGVTGTRFSVWAPNAQRVSVVGQFNYWDGRRHPMRLRKESGIWELFIPGAQHGQLYKFEMIDAHGKLRIKADPYAFEAQMRPETASLICGLPEKVVQTEERKQANRFDAPVSIYEVHLGSWRRHTDNNFWLSYRELADQLIPYVKWMGFTHLELLPVNEHPFDGSWGYQPTGLYAPTRRFGTRDDFRYFINAAHQAGLNVILDWVPGHFPSDDFGLADFDGTKLYEHSDPREGYHQDWNTLIYNYGRREVSNYLVGNALYWIERFGIDALRVDAVASMIYRDYSRKEGEWIPNEFGGRENLEAIEFLRNTNRILGEQVSGAVSMAEESTDFAGVSRPQDMGGLGFWYKWNLGWMHDTLDYMKLDPVHRQYHHDKLTFGMLYNYTENFVLPLSHDEVVHGKKSILDRMPGDAWQKFANLRAYYGWMWAFPGKKLLFMGNEFAQGREWNHDASLDWHLLEGGDNWHHGVQRLVRDLNHTYRHHKALHELDFDAYGFEWLVVDDNERSVLIFVRRDKVGNEIIVASNFTPVPRHDYRFGINQPGKWREIVNTDSMHYHGSNTGNGGVVHSDEIASHGRQHSLSLTLPPLATIWLVREGE</sequence>
<dbReference type="EC" id="2.4.1.18" evidence="1"/>
<dbReference type="EMBL" id="CP000822">
    <property type="protein sequence ID" value="ABV15896.1"/>
    <property type="molecule type" value="Genomic_DNA"/>
</dbReference>
<dbReference type="RefSeq" id="WP_012135537.1">
    <property type="nucleotide sequence ID" value="NC_009792.1"/>
</dbReference>
<dbReference type="SMR" id="A8AQY3"/>
<dbReference type="STRING" id="290338.CKO_04851"/>
<dbReference type="CAZy" id="CBM48">
    <property type="family name" value="Carbohydrate-Binding Module Family 48"/>
</dbReference>
<dbReference type="CAZy" id="GH13">
    <property type="family name" value="Glycoside Hydrolase Family 13"/>
</dbReference>
<dbReference type="GeneID" id="45138348"/>
<dbReference type="KEGG" id="cko:CKO_04851"/>
<dbReference type="HOGENOM" id="CLU_004245_3_2_6"/>
<dbReference type="OrthoDB" id="9800174at2"/>
<dbReference type="UniPathway" id="UPA00164"/>
<dbReference type="Proteomes" id="UP000008148">
    <property type="component" value="Chromosome"/>
</dbReference>
<dbReference type="GO" id="GO:0005829">
    <property type="term" value="C:cytosol"/>
    <property type="evidence" value="ECO:0007669"/>
    <property type="project" value="TreeGrafter"/>
</dbReference>
<dbReference type="GO" id="GO:0003844">
    <property type="term" value="F:1,4-alpha-glucan branching enzyme activity"/>
    <property type="evidence" value="ECO:0007669"/>
    <property type="project" value="UniProtKB-UniRule"/>
</dbReference>
<dbReference type="GO" id="GO:0043169">
    <property type="term" value="F:cation binding"/>
    <property type="evidence" value="ECO:0007669"/>
    <property type="project" value="InterPro"/>
</dbReference>
<dbReference type="GO" id="GO:0004553">
    <property type="term" value="F:hydrolase activity, hydrolyzing O-glycosyl compounds"/>
    <property type="evidence" value="ECO:0007669"/>
    <property type="project" value="InterPro"/>
</dbReference>
<dbReference type="GO" id="GO:0005978">
    <property type="term" value="P:glycogen biosynthetic process"/>
    <property type="evidence" value="ECO:0007669"/>
    <property type="project" value="UniProtKB-UniRule"/>
</dbReference>
<dbReference type="CDD" id="cd11322">
    <property type="entry name" value="AmyAc_Glg_BE"/>
    <property type="match status" value="1"/>
</dbReference>
<dbReference type="CDD" id="cd02855">
    <property type="entry name" value="E_set_GBE_prok_N"/>
    <property type="match status" value="1"/>
</dbReference>
<dbReference type="FunFam" id="2.60.40.10:FF:000169">
    <property type="entry name" value="1,4-alpha-glucan branching enzyme GlgB"/>
    <property type="match status" value="1"/>
</dbReference>
<dbReference type="FunFam" id="2.60.40.10:FF:000331">
    <property type="entry name" value="1,4-alpha-glucan branching enzyme GlgB"/>
    <property type="match status" value="1"/>
</dbReference>
<dbReference type="FunFam" id="2.60.40.1180:FF:000002">
    <property type="entry name" value="1,4-alpha-glucan branching enzyme GlgB"/>
    <property type="match status" value="1"/>
</dbReference>
<dbReference type="FunFam" id="3.20.20.80:FF:000003">
    <property type="entry name" value="1,4-alpha-glucan branching enzyme GlgB"/>
    <property type="match status" value="1"/>
</dbReference>
<dbReference type="Gene3D" id="3.20.20.80">
    <property type="entry name" value="Glycosidases"/>
    <property type="match status" value="1"/>
</dbReference>
<dbReference type="Gene3D" id="2.60.40.1180">
    <property type="entry name" value="Golgi alpha-mannosidase II"/>
    <property type="match status" value="1"/>
</dbReference>
<dbReference type="Gene3D" id="2.60.40.10">
    <property type="entry name" value="Immunoglobulins"/>
    <property type="match status" value="2"/>
</dbReference>
<dbReference type="HAMAP" id="MF_00685">
    <property type="entry name" value="GlgB"/>
    <property type="match status" value="1"/>
</dbReference>
<dbReference type="InterPro" id="IPR006048">
    <property type="entry name" value="A-amylase/branching_C"/>
</dbReference>
<dbReference type="InterPro" id="IPR037439">
    <property type="entry name" value="Branching_enzy"/>
</dbReference>
<dbReference type="InterPro" id="IPR006407">
    <property type="entry name" value="GlgB"/>
</dbReference>
<dbReference type="InterPro" id="IPR054169">
    <property type="entry name" value="GlgB_N"/>
</dbReference>
<dbReference type="InterPro" id="IPR044143">
    <property type="entry name" value="GlgB_N_E_set_prok"/>
</dbReference>
<dbReference type="InterPro" id="IPR006047">
    <property type="entry name" value="Glyco_hydro_13_cat_dom"/>
</dbReference>
<dbReference type="InterPro" id="IPR004193">
    <property type="entry name" value="Glyco_hydro_13_N"/>
</dbReference>
<dbReference type="InterPro" id="IPR013780">
    <property type="entry name" value="Glyco_hydro_b"/>
</dbReference>
<dbReference type="InterPro" id="IPR017853">
    <property type="entry name" value="Glycoside_hydrolase_SF"/>
</dbReference>
<dbReference type="InterPro" id="IPR013783">
    <property type="entry name" value="Ig-like_fold"/>
</dbReference>
<dbReference type="InterPro" id="IPR014756">
    <property type="entry name" value="Ig_E-set"/>
</dbReference>
<dbReference type="NCBIfam" id="TIGR01515">
    <property type="entry name" value="branching_enzym"/>
    <property type="match status" value="1"/>
</dbReference>
<dbReference type="NCBIfam" id="NF003811">
    <property type="entry name" value="PRK05402.1"/>
    <property type="match status" value="1"/>
</dbReference>
<dbReference type="NCBIfam" id="NF008967">
    <property type="entry name" value="PRK12313.1"/>
    <property type="match status" value="1"/>
</dbReference>
<dbReference type="PANTHER" id="PTHR43651">
    <property type="entry name" value="1,4-ALPHA-GLUCAN-BRANCHING ENZYME"/>
    <property type="match status" value="1"/>
</dbReference>
<dbReference type="PANTHER" id="PTHR43651:SF3">
    <property type="entry name" value="1,4-ALPHA-GLUCAN-BRANCHING ENZYME"/>
    <property type="match status" value="1"/>
</dbReference>
<dbReference type="Pfam" id="PF00128">
    <property type="entry name" value="Alpha-amylase"/>
    <property type="match status" value="1"/>
</dbReference>
<dbReference type="Pfam" id="PF02806">
    <property type="entry name" value="Alpha-amylase_C"/>
    <property type="match status" value="1"/>
</dbReference>
<dbReference type="Pfam" id="PF02922">
    <property type="entry name" value="CBM_48"/>
    <property type="match status" value="1"/>
</dbReference>
<dbReference type="Pfam" id="PF22019">
    <property type="entry name" value="GlgB_N"/>
    <property type="match status" value="1"/>
</dbReference>
<dbReference type="PIRSF" id="PIRSF000463">
    <property type="entry name" value="GlgB"/>
    <property type="match status" value="1"/>
</dbReference>
<dbReference type="SMART" id="SM00642">
    <property type="entry name" value="Aamy"/>
    <property type="match status" value="1"/>
</dbReference>
<dbReference type="SUPFAM" id="SSF51445">
    <property type="entry name" value="(Trans)glycosidases"/>
    <property type="match status" value="1"/>
</dbReference>
<dbReference type="SUPFAM" id="SSF81296">
    <property type="entry name" value="E set domains"/>
    <property type="match status" value="2"/>
</dbReference>
<dbReference type="SUPFAM" id="SSF51011">
    <property type="entry name" value="Glycosyl hydrolase domain"/>
    <property type="match status" value="1"/>
</dbReference>